<dbReference type="EMBL" id="CP001138">
    <property type="protein sequence ID" value="ACH50445.1"/>
    <property type="molecule type" value="Genomic_DNA"/>
</dbReference>
<dbReference type="RefSeq" id="WP_000488294.1">
    <property type="nucleotide sequence ID" value="NC_011149.1"/>
</dbReference>
<dbReference type="SMR" id="B5F7V5"/>
<dbReference type="KEGG" id="sea:SeAg_B0136"/>
<dbReference type="HOGENOM" id="CLU_107907_2_0_6"/>
<dbReference type="Proteomes" id="UP000008819">
    <property type="component" value="Chromosome"/>
</dbReference>
<dbReference type="GO" id="GO:0005737">
    <property type="term" value="C:cytoplasm"/>
    <property type="evidence" value="ECO:0007669"/>
    <property type="project" value="UniProtKB-UniRule"/>
</dbReference>
<dbReference type="GO" id="GO:0009295">
    <property type="term" value="C:nucleoid"/>
    <property type="evidence" value="ECO:0007669"/>
    <property type="project" value="UniProtKB-SubCell"/>
</dbReference>
<dbReference type="GO" id="GO:0003700">
    <property type="term" value="F:DNA-binding transcription factor activity"/>
    <property type="evidence" value="ECO:0007669"/>
    <property type="project" value="UniProtKB-UniRule"/>
</dbReference>
<dbReference type="GO" id="GO:0000976">
    <property type="term" value="F:transcription cis-regulatory region binding"/>
    <property type="evidence" value="ECO:0007669"/>
    <property type="project" value="TreeGrafter"/>
</dbReference>
<dbReference type="GO" id="GO:2000143">
    <property type="term" value="P:negative regulation of DNA-templated transcription initiation"/>
    <property type="evidence" value="ECO:0007669"/>
    <property type="project" value="TreeGrafter"/>
</dbReference>
<dbReference type="CDD" id="cd16321">
    <property type="entry name" value="MraZ_C"/>
    <property type="match status" value="1"/>
</dbReference>
<dbReference type="CDD" id="cd16320">
    <property type="entry name" value="MraZ_N"/>
    <property type="match status" value="1"/>
</dbReference>
<dbReference type="FunFam" id="3.40.1550.20:FF:000001">
    <property type="entry name" value="Transcriptional regulator MraZ"/>
    <property type="match status" value="1"/>
</dbReference>
<dbReference type="Gene3D" id="3.40.1550.20">
    <property type="entry name" value="Transcriptional regulator MraZ domain"/>
    <property type="match status" value="1"/>
</dbReference>
<dbReference type="HAMAP" id="MF_01008">
    <property type="entry name" value="MraZ"/>
    <property type="match status" value="1"/>
</dbReference>
<dbReference type="InterPro" id="IPR003444">
    <property type="entry name" value="MraZ"/>
</dbReference>
<dbReference type="InterPro" id="IPR035644">
    <property type="entry name" value="MraZ_C"/>
</dbReference>
<dbReference type="InterPro" id="IPR020603">
    <property type="entry name" value="MraZ_dom"/>
</dbReference>
<dbReference type="InterPro" id="IPR035642">
    <property type="entry name" value="MraZ_N"/>
</dbReference>
<dbReference type="InterPro" id="IPR038619">
    <property type="entry name" value="MraZ_sf"/>
</dbReference>
<dbReference type="InterPro" id="IPR007159">
    <property type="entry name" value="SpoVT-AbrB_dom"/>
</dbReference>
<dbReference type="InterPro" id="IPR037914">
    <property type="entry name" value="SpoVT-AbrB_sf"/>
</dbReference>
<dbReference type="NCBIfam" id="TIGR00242">
    <property type="entry name" value="division/cell wall cluster transcriptional repressor MraZ"/>
    <property type="match status" value="1"/>
</dbReference>
<dbReference type="PANTHER" id="PTHR34701">
    <property type="entry name" value="TRANSCRIPTIONAL REGULATOR MRAZ"/>
    <property type="match status" value="1"/>
</dbReference>
<dbReference type="PANTHER" id="PTHR34701:SF1">
    <property type="entry name" value="TRANSCRIPTIONAL REGULATOR MRAZ"/>
    <property type="match status" value="1"/>
</dbReference>
<dbReference type="Pfam" id="PF02381">
    <property type="entry name" value="MraZ"/>
    <property type="match status" value="2"/>
</dbReference>
<dbReference type="SUPFAM" id="SSF89447">
    <property type="entry name" value="AbrB/MazE/MraZ-like"/>
    <property type="match status" value="1"/>
</dbReference>
<dbReference type="PROSITE" id="PS51740">
    <property type="entry name" value="SPOVT_ABRB"/>
    <property type="match status" value="2"/>
</dbReference>
<accession>B5F7V5</accession>
<evidence type="ECO:0000255" key="1">
    <source>
        <dbReference type="HAMAP-Rule" id="MF_01008"/>
    </source>
</evidence>
<evidence type="ECO:0000255" key="2">
    <source>
        <dbReference type="PROSITE-ProRule" id="PRU01076"/>
    </source>
</evidence>
<reference key="1">
    <citation type="journal article" date="2011" name="J. Bacteriol.">
        <title>Comparative genomics of 28 Salmonella enterica isolates: evidence for CRISPR-mediated adaptive sublineage evolution.</title>
        <authorList>
            <person name="Fricke W.F."/>
            <person name="Mammel M.K."/>
            <person name="McDermott P.F."/>
            <person name="Tartera C."/>
            <person name="White D.G."/>
            <person name="Leclerc J.E."/>
            <person name="Ravel J."/>
            <person name="Cebula T.A."/>
        </authorList>
    </citation>
    <scope>NUCLEOTIDE SEQUENCE [LARGE SCALE GENOMIC DNA]</scope>
    <source>
        <strain>SL483</strain>
    </source>
</reference>
<name>MRAZ_SALA4</name>
<organism>
    <name type="scientific">Salmonella agona (strain SL483)</name>
    <dbReference type="NCBI Taxonomy" id="454166"/>
    <lineage>
        <taxon>Bacteria</taxon>
        <taxon>Pseudomonadati</taxon>
        <taxon>Pseudomonadota</taxon>
        <taxon>Gammaproteobacteria</taxon>
        <taxon>Enterobacterales</taxon>
        <taxon>Enterobacteriaceae</taxon>
        <taxon>Salmonella</taxon>
    </lineage>
</organism>
<sequence>MFRGATLVNLDSKGRLTVPTRYREQLIESATGQMVCTIDIHHPCLLLYPLPEWEIIEQKLSRLSSMNPVERRVQRLLLGHASECQMDGAGRLLIAPVLRQHAGLTKEVMLVGQFNKFELWDETTWYQQVKEDIDAEQSATETLSERLQDLSL</sequence>
<proteinExistence type="inferred from homology"/>
<comment type="function">
    <text evidence="1">Negatively regulates its own expression and that of the subsequent genes in the proximal part of the division and cell wall (dcw) gene cluster. Acts by binding directly to DNA. May also regulate the expression of genes outside the dcw cluster.</text>
</comment>
<comment type="subunit">
    <text evidence="1">Forms oligomers.</text>
</comment>
<comment type="subcellular location">
    <subcellularLocation>
        <location evidence="1">Cytoplasm</location>
        <location evidence="1">Nucleoid</location>
    </subcellularLocation>
</comment>
<comment type="similarity">
    <text evidence="1">Belongs to the MraZ family.</text>
</comment>
<protein>
    <recommendedName>
        <fullName>Transcriptional regulator MraZ</fullName>
    </recommendedName>
</protein>
<keyword id="KW-0963">Cytoplasm</keyword>
<keyword id="KW-0238">DNA-binding</keyword>
<keyword id="KW-0677">Repeat</keyword>
<keyword id="KW-0678">Repressor</keyword>
<keyword id="KW-0804">Transcription</keyword>
<keyword id="KW-0805">Transcription regulation</keyword>
<feature type="chain" id="PRO_1000191326" description="Transcriptional regulator MraZ">
    <location>
        <begin position="1"/>
        <end position="152"/>
    </location>
</feature>
<feature type="domain" description="SpoVT-AbrB 1" evidence="2">
    <location>
        <begin position="5"/>
        <end position="52"/>
    </location>
</feature>
<feature type="domain" description="SpoVT-AbrB 2" evidence="2">
    <location>
        <begin position="81"/>
        <end position="124"/>
    </location>
</feature>
<gene>
    <name evidence="1" type="primary">mraZ</name>
    <name type="ordered locus">SeAg_B0136</name>
</gene>